<feature type="chain" id="PRO_1000043162" description="3-dehydroquinate dehydratase">
    <location>
        <begin position="1"/>
        <end position="226"/>
    </location>
</feature>
<feature type="active site" description="Proton donor/acceptor" evidence="1">
    <location>
        <position position="119"/>
    </location>
</feature>
<feature type="active site" description="Schiff-base intermediate with substrate" evidence="1">
    <location>
        <position position="146"/>
    </location>
</feature>
<feature type="binding site" evidence="1">
    <location>
        <position position="9"/>
    </location>
    <ligand>
        <name>3-dehydroquinate</name>
        <dbReference type="ChEBI" id="CHEBI:32364"/>
    </ligand>
</feature>
<feature type="binding site" evidence="1">
    <location>
        <begin position="32"/>
        <end position="34"/>
    </location>
    <ligand>
        <name>3-dehydroquinate</name>
        <dbReference type="ChEBI" id="CHEBI:32364"/>
    </ligand>
</feature>
<feature type="binding site" evidence="1">
    <location>
        <position position="59"/>
    </location>
    <ligand>
        <name>3-dehydroquinate</name>
        <dbReference type="ChEBI" id="CHEBI:32364"/>
    </ligand>
</feature>
<feature type="binding site" evidence="1">
    <location>
        <position position="187"/>
    </location>
    <ligand>
        <name>3-dehydroquinate</name>
        <dbReference type="ChEBI" id="CHEBI:32364"/>
    </ligand>
</feature>
<feature type="binding site" evidence="1">
    <location>
        <position position="208"/>
    </location>
    <ligand>
        <name>3-dehydroquinate</name>
        <dbReference type="ChEBI" id="CHEBI:32364"/>
    </ligand>
</feature>
<feature type="binding site" evidence="1">
    <location>
        <position position="212"/>
    </location>
    <ligand>
        <name>3-dehydroquinate</name>
        <dbReference type="ChEBI" id="CHEBI:32364"/>
    </ligand>
</feature>
<dbReference type="EC" id="4.2.1.10" evidence="1"/>
<dbReference type="EMBL" id="CR522870">
    <property type="protein sequence ID" value="CAG37742.1"/>
    <property type="molecule type" value="Genomic_DNA"/>
</dbReference>
<dbReference type="RefSeq" id="WP_011190254.1">
    <property type="nucleotide sequence ID" value="NC_006138.1"/>
</dbReference>
<dbReference type="SMR" id="Q6AIT8"/>
<dbReference type="STRING" id="177439.DP3013"/>
<dbReference type="KEGG" id="dps:DP3013"/>
<dbReference type="eggNOG" id="COG0710">
    <property type="taxonomic scope" value="Bacteria"/>
</dbReference>
<dbReference type="HOGENOM" id="CLU_064444_2_1_7"/>
<dbReference type="OrthoDB" id="9813659at2"/>
<dbReference type="UniPathway" id="UPA00053">
    <property type="reaction ID" value="UER00086"/>
</dbReference>
<dbReference type="Proteomes" id="UP000000602">
    <property type="component" value="Chromosome"/>
</dbReference>
<dbReference type="GO" id="GO:0003855">
    <property type="term" value="F:3-dehydroquinate dehydratase activity"/>
    <property type="evidence" value="ECO:0007669"/>
    <property type="project" value="UniProtKB-UniRule"/>
</dbReference>
<dbReference type="GO" id="GO:0046279">
    <property type="term" value="P:3,4-dihydroxybenzoate biosynthetic process"/>
    <property type="evidence" value="ECO:0007669"/>
    <property type="project" value="TreeGrafter"/>
</dbReference>
<dbReference type="GO" id="GO:0008652">
    <property type="term" value="P:amino acid biosynthetic process"/>
    <property type="evidence" value="ECO:0007669"/>
    <property type="project" value="UniProtKB-KW"/>
</dbReference>
<dbReference type="GO" id="GO:0009073">
    <property type="term" value="P:aromatic amino acid family biosynthetic process"/>
    <property type="evidence" value="ECO:0007669"/>
    <property type="project" value="UniProtKB-KW"/>
</dbReference>
<dbReference type="GO" id="GO:0009423">
    <property type="term" value="P:chorismate biosynthetic process"/>
    <property type="evidence" value="ECO:0007669"/>
    <property type="project" value="UniProtKB-UniRule"/>
</dbReference>
<dbReference type="CDD" id="cd00502">
    <property type="entry name" value="DHQase_I"/>
    <property type="match status" value="1"/>
</dbReference>
<dbReference type="Gene3D" id="3.20.20.70">
    <property type="entry name" value="Aldolase class I"/>
    <property type="match status" value="1"/>
</dbReference>
<dbReference type="HAMAP" id="MF_00214">
    <property type="entry name" value="AroD"/>
    <property type="match status" value="1"/>
</dbReference>
<dbReference type="InterPro" id="IPR018508">
    <property type="entry name" value="3-dehydroquinate_DH_AS"/>
</dbReference>
<dbReference type="InterPro" id="IPR013785">
    <property type="entry name" value="Aldolase_TIM"/>
</dbReference>
<dbReference type="InterPro" id="IPR001381">
    <property type="entry name" value="DHquinase_I"/>
</dbReference>
<dbReference type="InterPro" id="IPR050146">
    <property type="entry name" value="Type-I_3-dehydroquinase"/>
</dbReference>
<dbReference type="NCBIfam" id="TIGR01093">
    <property type="entry name" value="aroD"/>
    <property type="match status" value="1"/>
</dbReference>
<dbReference type="PANTHER" id="PTHR43699">
    <property type="entry name" value="3-DEHYDROQUINATE DEHYDRATASE"/>
    <property type="match status" value="1"/>
</dbReference>
<dbReference type="PANTHER" id="PTHR43699:SF1">
    <property type="entry name" value="3-DEHYDROQUINATE DEHYDRATASE"/>
    <property type="match status" value="1"/>
</dbReference>
<dbReference type="Pfam" id="PF01487">
    <property type="entry name" value="DHquinase_I"/>
    <property type="match status" value="1"/>
</dbReference>
<dbReference type="SUPFAM" id="SSF51569">
    <property type="entry name" value="Aldolase"/>
    <property type="match status" value="1"/>
</dbReference>
<dbReference type="PROSITE" id="PS01028">
    <property type="entry name" value="DEHYDROQUINASE_I"/>
    <property type="match status" value="1"/>
</dbReference>
<gene>
    <name evidence="1" type="primary">aroD</name>
    <name type="ordered locus">DP3013</name>
</gene>
<comment type="function">
    <text evidence="1">Involved in the third step of the chorismate pathway, which leads to the biosynthesis of aromatic amino acids. Catalyzes the cis-dehydration of 3-dehydroquinate (DHQ) and introduces the first double bond of the aromatic ring to yield 3-dehydroshikimate.</text>
</comment>
<comment type="catalytic activity">
    <reaction evidence="1">
        <text>3-dehydroquinate = 3-dehydroshikimate + H2O</text>
        <dbReference type="Rhea" id="RHEA:21096"/>
        <dbReference type="ChEBI" id="CHEBI:15377"/>
        <dbReference type="ChEBI" id="CHEBI:16630"/>
        <dbReference type="ChEBI" id="CHEBI:32364"/>
        <dbReference type="EC" id="4.2.1.10"/>
    </reaction>
</comment>
<comment type="pathway">
    <text evidence="1">Metabolic intermediate biosynthesis; chorismate biosynthesis; chorismate from D-erythrose 4-phosphate and phosphoenolpyruvate: step 3/7.</text>
</comment>
<comment type="subunit">
    <text evidence="1">Homodimer.</text>
</comment>
<comment type="similarity">
    <text evidence="1">Belongs to the type-I 3-dehydroquinase family.</text>
</comment>
<sequence>MHSRKICVSLGQPTMPQALEASLRIFGADVIEVRLDYIDVPEIDPFVESLATDLLFTCRPTWEGGLFAGTEEDRLALLAEAVRAGAAYIDLELRSAEESHQYLRTYLAERETELILSYHDFESTATLAKLTGIIDQMQDAGADIGKLITTANSAADVVRVFQVLEYAAKKGLPLIAFCMGEAGAVSRVASCDLGGYMTYCCADGAEVTAAGQITISEMRGIFARYP</sequence>
<accession>Q6AIT8</accession>
<organism>
    <name type="scientific">Desulfotalea psychrophila (strain LSv54 / DSM 12343)</name>
    <dbReference type="NCBI Taxonomy" id="177439"/>
    <lineage>
        <taxon>Bacteria</taxon>
        <taxon>Pseudomonadati</taxon>
        <taxon>Thermodesulfobacteriota</taxon>
        <taxon>Desulfobulbia</taxon>
        <taxon>Desulfobulbales</taxon>
        <taxon>Desulfocapsaceae</taxon>
        <taxon>Desulfotalea</taxon>
    </lineage>
</organism>
<evidence type="ECO:0000255" key="1">
    <source>
        <dbReference type="HAMAP-Rule" id="MF_00214"/>
    </source>
</evidence>
<reference key="1">
    <citation type="journal article" date="2004" name="Environ. Microbiol.">
        <title>The genome of Desulfotalea psychrophila, a sulfate-reducing bacterium from permanently cold Arctic sediments.</title>
        <authorList>
            <person name="Rabus R."/>
            <person name="Ruepp A."/>
            <person name="Frickey T."/>
            <person name="Rattei T."/>
            <person name="Fartmann B."/>
            <person name="Stark M."/>
            <person name="Bauer M."/>
            <person name="Zibat A."/>
            <person name="Lombardot T."/>
            <person name="Becker I."/>
            <person name="Amann J."/>
            <person name="Gellner K."/>
            <person name="Teeling H."/>
            <person name="Leuschner W.D."/>
            <person name="Gloeckner F.-O."/>
            <person name="Lupas A.N."/>
            <person name="Amann R."/>
            <person name="Klenk H.-P."/>
        </authorList>
    </citation>
    <scope>NUCLEOTIDE SEQUENCE [LARGE SCALE GENOMIC DNA]</scope>
    <source>
        <strain>DSM 12343 / LSv54</strain>
    </source>
</reference>
<name>AROD_DESPS</name>
<keyword id="KW-0028">Amino-acid biosynthesis</keyword>
<keyword id="KW-0057">Aromatic amino acid biosynthesis</keyword>
<keyword id="KW-0456">Lyase</keyword>
<keyword id="KW-1185">Reference proteome</keyword>
<keyword id="KW-0704">Schiff base</keyword>
<protein>
    <recommendedName>
        <fullName evidence="1">3-dehydroquinate dehydratase</fullName>
        <shortName evidence="1">3-dehydroquinase</shortName>
        <ecNumber evidence="1">4.2.1.10</ecNumber>
    </recommendedName>
    <alternativeName>
        <fullName evidence="1">Type I DHQase</fullName>
    </alternativeName>
    <alternativeName>
        <fullName evidence="1">Type I dehydroquinase</fullName>
        <shortName evidence="1">DHQ1</shortName>
    </alternativeName>
</protein>
<proteinExistence type="inferred from homology"/>